<keyword id="KW-0963">Cytoplasm</keyword>
<keyword id="KW-0251">Elongation factor</keyword>
<keyword id="KW-0342">GTP-binding</keyword>
<keyword id="KW-0378">Hydrolase</keyword>
<keyword id="KW-0460">Magnesium</keyword>
<keyword id="KW-0479">Metal-binding</keyword>
<keyword id="KW-0547">Nucleotide-binding</keyword>
<keyword id="KW-0648">Protein biosynthesis</keyword>
<reference key="1">
    <citation type="submission" date="2005-07" db="EMBL/GenBank/DDBJ databases">
        <title>Complete sequence of Synechococcus sp. CC9605.</title>
        <authorList>
            <consortium name="US DOE Joint Genome Institute"/>
            <person name="Copeland A."/>
            <person name="Lucas S."/>
            <person name="Lapidus A."/>
            <person name="Barry K."/>
            <person name="Detter J.C."/>
            <person name="Glavina T."/>
            <person name="Hammon N."/>
            <person name="Israni S."/>
            <person name="Pitluck S."/>
            <person name="Schmutz J."/>
            <person name="Martinez M."/>
            <person name="Larimer F."/>
            <person name="Land M."/>
            <person name="Kyrpides N."/>
            <person name="Ivanova N."/>
            <person name="Richardson P."/>
        </authorList>
    </citation>
    <scope>NUCLEOTIDE SEQUENCE [LARGE SCALE GENOMIC DNA]</scope>
    <source>
        <strain>CC9605</strain>
    </source>
</reference>
<evidence type="ECO:0000250" key="1"/>
<evidence type="ECO:0000255" key="2">
    <source>
        <dbReference type="HAMAP-Rule" id="MF_00118"/>
    </source>
</evidence>
<feature type="chain" id="PRO_1000015775" description="Elongation factor Tu">
    <location>
        <begin position="1"/>
        <end position="399"/>
    </location>
</feature>
<feature type="domain" description="tr-type G">
    <location>
        <begin position="10"/>
        <end position="204"/>
    </location>
</feature>
<feature type="region of interest" description="G1" evidence="1">
    <location>
        <begin position="19"/>
        <end position="26"/>
    </location>
</feature>
<feature type="region of interest" description="G2" evidence="1">
    <location>
        <begin position="60"/>
        <end position="64"/>
    </location>
</feature>
<feature type="region of interest" description="G3" evidence="1">
    <location>
        <begin position="81"/>
        <end position="84"/>
    </location>
</feature>
<feature type="region of interest" description="G4" evidence="1">
    <location>
        <begin position="136"/>
        <end position="139"/>
    </location>
</feature>
<feature type="region of interest" description="G5" evidence="1">
    <location>
        <begin position="174"/>
        <end position="176"/>
    </location>
</feature>
<feature type="binding site" evidence="2">
    <location>
        <begin position="19"/>
        <end position="26"/>
    </location>
    <ligand>
        <name>GTP</name>
        <dbReference type="ChEBI" id="CHEBI:37565"/>
    </ligand>
</feature>
<feature type="binding site" evidence="2">
    <location>
        <position position="26"/>
    </location>
    <ligand>
        <name>Mg(2+)</name>
        <dbReference type="ChEBI" id="CHEBI:18420"/>
    </ligand>
</feature>
<feature type="binding site" evidence="2">
    <location>
        <begin position="81"/>
        <end position="85"/>
    </location>
    <ligand>
        <name>GTP</name>
        <dbReference type="ChEBI" id="CHEBI:37565"/>
    </ligand>
</feature>
<feature type="binding site" evidence="2">
    <location>
        <begin position="136"/>
        <end position="139"/>
    </location>
    <ligand>
        <name>GTP</name>
        <dbReference type="ChEBI" id="CHEBI:37565"/>
    </ligand>
</feature>
<dbReference type="EC" id="3.6.5.3" evidence="2"/>
<dbReference type="EMBL" id="CP000110">
    <property type="protein sequence ID" value="ABB34096.1"/>
    <property type="molecule type" value="Genomic_DNA"/>
</dbReference>
<dbReference type="RefSeq" id="WP_006851621.1">
    <property type="nucleotide sequence ID" value="NC_007516.1"/>
</dbReference>
<dbReference type="SMR" id="Q3AMT6"/>
<dbReference type="STRING" id="110662.Syncc9605_0320"/>
<dbReference type="KEGG" id="syd:Syncc9605_0320"/>
<dbReference type="eggNOG" id="COG0050">
    <property type="taxonomic scope" value="Bacteria"/>
</dbReference>
<dbReference type="HOGENOM" id="CLU_007265_0_1_3"/>
<dbReference type="OrthoDB" id="9804504at2"/>
<dbReference type="GO" id="GO:0005829">
    <property type="term" value="C:cytosol"/>
    <property type="evidence" value="ECO:0007669"/>
    <property type="project" value="TreeGrafter"/>
</dbReference>
<dbReference type="GO" id="GO:0005525">
    <property type="term" value="F:GTP binding"/>
    <property type="evidence" value="ECO:0007669"/>
    <property type="project" value="UniProtKB-UniRule"/>
</dbReference>
<dbReference type="GO" id="GO:0003924">
    <property type="term" value="F:GTPase activity"/>
    <property type="evidence" value="ECO:0007669"/>
    <property type="project" value="InterPro"/>
</dbReference>
<dbReference type="GO" id="GO:0003746">
    <property type="term" value="F:translation elongation factor activity"/>
    <property type="evidence" value="ECO:0007669"/>
    <property type="project" value="UniProtKB-UniRule"/>
</dbReference>
<dbReference type="CDD" id="cd01884">
    <property type="entry name" value="EF_Tu"/>
    <property type="match status" value="1"/>
</dbReference>
<dbReference type="CDD" id="cd03697">
    <property type="entry name" value="EFTU_II"/>
    <property type="match status" value="1"/>
</dbReference>
<dbReference type="CDD" id="cd03707">
    <property type="entry name" value="EFTU_III"/>
    <property type="match status" value="1"/>
</dbReference>
<dbReference type="FunFam" id="2.40.30.10:FF:000001">
    <property type="entry name" value="Elongation factor Tu"/>
    <property type="match status" value="1"/>
</dbReference>
<dbReference type="FunFam" id="3.40.50.300:FF:000003">
    <property type="entry name" value="Elongation factor Tu"/>
    <property type="match status" value="1"/>
</dbReference>
<dbReference type="Gene3D" id="3.40.50.300">
    <property type="entry name" value="P-loop containing nucleotide triphosphate hydrolases"/>
    <property type="match status" value="1"/>
</dbReference>
<dbReference type="Gene3D" id="2.40.30.10">
    <property type="entry name" value="Translation factors"/>
    <property type="match status" value="2"/>
</dbReference>
<dbReference type="HAMAP" id="MF_00118_B">
    <property type="entry name" value="EF_Tu_B"/>
    <property type="match status" value="1"/>
</dbReference>
<dbReference type="InterPro" id="IPR041709">
    <property type="entry name" value="EF-Tu_GTP-bd"/>
</dbReference>
<dbReference type="InterPro" id="IPR050055">
    <property type="entry name" value="EF-Tu_GTPase"/>
</dbReference>
<dbReference type="InterPro" id="IPR004161">
    <property type="entry name" value="EFTu-like_2"/>
</dbReference>
<dbReference type="InterPro" id="IPR033720">
    <property type="entry name" value="EFTU_2"/>
</dbReference>
<dbReference type="InterPro" id="IPR031157">
    <property type="entry name" value="G_TR_CS"/>
</dbReference>
<dbReference type="InterPro" id="IPR027417">
    <property type="entry name" value="P-loop_NTPase"/>
</dbReference>
<dbReference type="InterPro" id="IPR005225">
    <property type="entry name" value="Small_GTP-bd"/>
</dbReference>
<dbReference type="InterPro" id="IPR000795">
    <property type="entry name" value="T_Tr_GTP-bd_dom"/>
</dbReference>
<dbReference type="InterPro" id="IPR009000">
    <property type="entry name" value="Transl_B-barrel_sf"/>
</dbReference>
<dbReference type="InterPro" id="IPR009001">
    <property type="entry name" value="Transl_elong_EF1A/Init_IF2_C"/>
</dbReference>
<dbReference type="InterPro" id="IPR004541">
    <property type="entry name" value="Transl_elong_EFTu/EF1A_bac/org"/>
</dbReference>
<dbReference type="InterPro" id="IPR004160">
    <property type="entry name" value="Transl_elong_EFTu/EF1A_C"/>
</dbReference>
<dbReference type="NCBIfam" id="TIGR00485">
    <property type="entry name" value="EF-Tu"/>
    <property type="match status" value="1"/>
</dbReference>
<dbReference type="NCBIfam" id="NF000766">
    <property type="entry name" value="PRK00049.1"/>
    <property type="match status" value="1"/>
</dbReference>
<dbReference type="NCBIfam" id="NF009372">
    <property type="entry name" value="PRK12735.1"/>
    <property type="match status" value="1"/>
</dbReference>
<dbReference type="NCBIfam" id="NF009373">
    <property type="entry name" value="PRK12736.1"/>
    <property type="match status" value="1"/>
</dbReference>
<dbReference type="NCBIfam" id="TIGR00231">
    <property type="entry name" value="small_GTP"/>
    <property type="match status" value="1"/>
</dbReference>
<dbReference type="PANTHER" id="PTHR43721:SF22">
    <property type="entry name" value="ELONGATION FACTOR TU, MITOCHONDRIAL"/>
    <property type="match status" value="1"/>
</dbReference>
<dbReference type="PANTHER" id="PTHR43721">
    <property type="entry name" value="ELONGATION FACTOR TU-RELATED"/>
    <property type="match status" value="1"/>
</dbReference>
<dbReference type="Pfam" id="PF00009">
    <property type="entry name" value="GTP_EFTU"/>
    <property type="match status" value="1"/>
</dbReference>
<dbReference type="Pfam" id="PF03144">
    <property type="entry name" value="GTP_EFTU_D2"/>
    <property type="match status" value="1"/>
</dbReference>
<dbReference type="Pfam" id="PF03143">
    <property type="entry name" value="GTP_EFTU_D3"/>
    <property type="match status" value="1"/>
</dbReference>
<dbReference type="PRINTS" id="PR00315">
    <property type="entry name" value="ELONGATNFCT"/>
</dbReference>
<dbReference type="SUPFAM" id="SSF50465">
    <property type="entry name" value="EF-Tu/eEF-1alpha/eIF2-gamma C-terminal domain"/>
    <property type="match status" value="1"/>
</dbReference>
<dbReference type="SUPFAM" id="SSF52540">
    <property type="entry name" value="P-loop containing nucleoside triphosphate hydrolases"/>
    <property type="match status" value="1"/>
</dbReference>
<dbReference type="SUPFAM" id="SSF50447">
    <property type="entry name" value="Translation proteins"/>
    <property type="match status" value="1"/>
</dbReference>
<dbReference type="PROSITE" id="PS00301">
    <property type="entry name" value="G_TR_1"/>
    <property type="match status" value="1"/>
</dbReference>
<dbReference type="PROSITE" id="PS51722">
    <property type="entry name" value="G_TR_2"/>
    <property type="match status" value="1"/>
</dbReference>
<gene>
    <name evidence="2" type="primary">tuf</name>
    <name type="ordered locus">Syncc9605_0320</name>
</gene>
<protein>
    <recommendedName>
        <fullName evidence="2">Elongation factor Tu</fullName>
        <shortName evidence="2">EF-Tu</shortName>
        <ecNumber evidence="2">3.6.5.3</ecNumber>
    </recommendedName>
</protein>
<accession>Q3AMT6</accession>
<comment type="function">
    <text evidence="2">GTP hydrolase that promotes the GTP-dependent binding of aminoacyl-tRNA to the A-site of ribosomes during protein biosynthesis.</text>
</comment>
<comment type="catalytic activity">
    <reaction evidence="2">
        <text>GTP + H2O = GDP + phosphate + H(+)</text>
        <dbReference type="Rhea" id="RHEA:19669"/>
        <dbReference type="ChEBI" id="CHEBI:15377"/>
        <dbReference type="ChEBI" id="CHEBI:15378"/>
        <dbReference type="ChEBI" id="CHEBI:37565"/>
        <dbReference type="ChEBI" id="CHEBI:43474"/>
        <dbReference type="ChEBI" id="CHEBI:58189"/>
        <dbReference type="EC" id="3.6.5.3"/>
    </reaction>
    <physiologicalReaction direction="left-to-right" evidence="2">
        <dbReference type="Rhea" id="RHEA:19670"/>
    </physiologicalReaction>
</comment>
<comment type="subunit">
    <text evidence="2">Monomer.</text>
</comment>
<comment type="subcellular location">
    <subcellularLocation>
        <location evidence="2">Cytoplasm</location>
    </subcellularLocation>
</comment>
<comment type="similarity">
    <text evidence="2">Belongs to the TRAFAC class translation factor GTPase superfamily. Classic translation factor GTPase family. EF-Tu/EF-1A subfamily.</text>
</comment>
<proteinExistence type="inferred from homology"/>
<sequence>MAREKFERNKPHVNIGTIGHVDHGKTTLTAAITNVLAKKGQAEVQNYADIDGAPEERERGITINTAHVEYETETRHYAHVDCPGHADYVKNMITGAAQMDGAILVCAATDGPMAQTKEHILLAKQVGVPALVVALNKCDMVDDEEIIELVEMEIRELLSSYDFPGDDIPVVQVSGLKAIEGEAEWEAKIEELMAAVDSSIPEPEREVDKPFLMAVEDVFSITGRGTVATGRIERGIVKVGEEIEIVGIKDTRKTTVTGVEMFRKLLDEGMAGDNVGLLLRGIQKEDIERGMVLVKPGSITPHTKFEGQVYVLKKEEGGRHTPFFAGYRPQFYIRTTDVTGQITAFTAEDGSNVEMVMPGDNIQMTGELICPVAIEQGMRFAIREGGRTIGAGVVSKIIE</sequence>
<name>EFTU_SYNSC</name>
<organism>
    <name type="scientific">Synechococcus sp. (strain CC9605)</name>
    <dbReference type="NCBI Taxonomy" id="110662"/>
    <lineage>
        <taxon>Bacteria</taxon>
        <taxon>Bacillati</taxon>
        <taxon>Cyanobacteriota</taxon>
        <taxon>Cyanophyceae</taxon>
        <taxon>Synechococcales</taxon>
        <taxon>Synechococcaceae</taxon>
        <taxon>Synechococcus</taxon>
    </lineage>
</organism>